<dbReference type="PIR" id="A27819">
    <property type="entry name" value="A27819"/>
</dbReference>
<dbReference type="SMR" id="P07086"/>
<dbReference type="Proteomes" id="UP000694941">
    <property type="component" value="Unplaced"/>
</dbReference>
<dbReference type="GO" id="GO:0042742">
    <property type="term" value="P:defense response to bacterium"/>
    <property type="evidence" value="ECO:0007669"/>
    <property type="project" value="UniProtKB-KW"/>
</dbReference>
<dbReference type="Gene3D" id="3.30.160.320">
    <property type="match status" value="1"/>
</dbReference>
<dbReference type="InterPro" id="IPR024509">
    <property type="entry name" value="Anti-LPS_factor/Scygonadin"/>
</dbReference>
<dbReference type="InterPro" id="IPR038539">
    <property type="entry name" value="Anti-LPS_factor/Scygonadin_sf"/>
</dbReference>
<dbReference type="Pfam" id="PF11630">
    <property type="entry name" value="Anti-LPS-SCYG"/>
    <property type="match status" value="1"/>
</dbReference>
<proteinExistence type="evidence at protein level"/>
<name>ALPS_LIMPO</name>
<feature type="chain" id="PRO_0000064572" description="Anti-lipopolysaccharide factor">
    <location>
        <begin position="1"/>
        <end position="101"/>
    </location>
</feature>
<feature type="disulfide bond">
    <location>
        <begin position="31"/>
        <end position="52"/>
    </location>
</feature>
<feature type="sequence variant">
    <original>K</original>
    <variation>N</variation>
    <location>
        <position position="13"/>
    </location>
</feature>
<comment type="function">
    <text>Binds tightly to LPS and thus specifically inhibits the LPS-mediated activation of the hemolymph coagulation. It has a strong antibacterial effect especially on the growth of Gram-negative bacteria.</text>
</comment>
<organism>
    <name type="scientific">Limulus polyphemus</name>
    <name type="common">Atlantic horseshoe crab</name>
    <dbReference type="NCBI Taxonomy" id="6850"/>
    <lineage>
        <taxon>Eukaryota</taxon>
        <taxon>Metazoa</taxon>
        <taxon>Ecdysozoa</taxon>
        <taxon>Arthropoda</taxon>
        <taxon>Chelicerata</taxon>
        <taxon>Merostomata</taxon>
        <taxon>Xiphosura</taxon>
        <taxon>Limulidae</taxon>
        <taxon>Limulus</taxon>
    </lineage>
</organism>
<accession>P07086</accession>
<keyword id="KW-0044">Antibiotic</keyword>
<keyword id="KW-0929">Antimicrobial</keyword>
<keyword id="KW-0903">Direct protein sequencing</keyword>
<keyword id="KW-1015">Disulfide bond</keyword>
<reference key="1">
    <citation type="journal article" date="1987" name="J. Biochem.">
        <title>Primary structure of anti-lipopolysaccharide factor from American horseshoe crab, Limulus polyphemus.</title>
        <authorList>
            <person name="Muta T."/>
            <person name="Miyata T."/>
            <person name="Tokunaga F."/>
            <person name="Nakamura T."/>
            <person name="Iwanaga S."/>
        </authorList>
    </citation>
    <scope>PROTEIN SEQUENCE</scope>
</reference>
<reference key="2">
    <citation type="journal article" date="1993" name="EMBO J.">
        <title>Crystal structure of an endotoxin-neutralizing protein from the horseshoe crab, Limulus anti-LPS factor, at 1.5-A resolution.</title>
        <authorList>
            <person name="Hoess A."/>
            <person name="Watson S."/>
            <person name="Siber G.R."/>
            <person name="Liddington R."/>
        </authorList>
    </citation>
    <scope>X-RAY CRYSTALLOGRAPHY (1.5 ANGSTROMS)</scope>
</reference>
<sequence length="101" mass="11801">DGIWTQLIFTLVKNLATLWQSGDFQFLDHECHYRIKPTFRRLKWKYKGKFWCPSWTSITGRATKSSRSGAVEHSVRNFVGQAKSSGLITQRQAEQFISQYN</sequence>
<protein>
    <recommendedName>
        <fullName>Anti-lipopolysaccharide factor</fullName>
        <shortName>anti-LPS</shortName>
    </recommendedName>
    <alternativeName>
        <fullName>LALF</fullName>
    </alternativeName>
</protein>